<name>DNAA_LEGPH</name>
<organism>
    <name type="scientific">Legionella pneumophila subsp. pneumophila (strain Philadelphia 1 / ATCC 33152 / DSM 7513)</name>
    <dbReference type="NCBI Taxonomy" id="272624"/>
    <lineage>
        <taxon>Bacteria</taxon>
        <taxon>Pseudomonadati</taxon>
        <taxon>Pseudomonadota</taxon>
        <taxon>Gammaproteobacteria</taxon>
        <taxon>Legionellales</taxon>
        <taxon>Legionellaceae</taxon>
        <taxon>Legionella</taxon>
    </lineage>
</organism>
<accession>Q5ZZK8</accession>
<proteinExistence type="inferred from homology"/>
<keyword id="KW-0067">ATP-binding</keyword>
<keyword id="KW-0963">Cytoplasm</keyword>
<keyword id="KW-0235">DNA replication</keyword>
<keyword id="KW-0238">DNA-binding</keyword>
<keyword id="KW-0446">Lipid-binding</keyword>
<keyword id="KW-0547">Nucleotide-binding</keyword>
<keyword id="KW-1185">Reference proteome</keyword>
<comment type="function">
    <text evidence="1">Plays an essential role in the initiation and regulation of chromosomal replication. ATP-DnaA binds to the origin of replication (oriC) to initiate formation of the DNA replication initiation complex once per cell cycle. Binds the DnaA box (a 9 base pair repeat at the origin) and separates the double-stranded (ds)DNA. Forms a right-handed helical filament on oriC DNA; dsDNA binds to the exterior of the filament while single-stranded (ss)DNA is stabiized in the filament's interior. The ATP-DnaA-oriC complex binds and stabilizes one strand of the AT-rich DNA unwinding element (DUE), permitting loading of DNA polymerase. After initiation quickly degrades to an ADP-DnaA complex that is not apt for DNA replication. Binds acidic phospholipids.</text>
</comment>
<comment type="subunit">
    <text evidence="1">Oligomerizes as a right-handed, spiral filament on DNA at oriC.</text>
</comment>
<comment type="subcellular location">
    <subcellularLocation>
        <location evidence="1">Cytoplasm</location>
    </subcellularLocation>
</comment>
<comment type="domain">
    <text evidence="1">Domain I is involved in oligomerization and binding regulators, domain II is flexibile and of varying length in different bacteria, domain III forms the AAA+ region, while domain IV binds dsDNA.</text>
</comment>
<comment type="similarity">
    <text evidence="1">Belongs to the DnaA family.</text>
</comment>
<feature type="chain" id="PRO_0000114196" description="Chromosomal replication initiator protein DnaA">
    <location>
        <begin position="1"/>
        <end position="452"/>
    </location>
</feature>
<feature type="region of interest" description="Domain I, interacts with DnaA modulators" evidence="1">
    <location>
        <begin position="1"/>
        <end position="85"/>
    </location>
</feature>
<feature type="region of interest" description="Domain II" evidence="1">
    <location>
        <begin position="85"/>
        <end position="115"/>
    </location>
</feature>
<feature type="region of interest" description="Domain III, AAA+ region" evidence="1">
    <location>
        <begin position="116"/>
        <end position="332"/>
    </location>
</feature>
<feature type="region of interest" description="Domain IV, binds dsDNA" evidence="1">
    <location>
        <begin position="333"/>
        <end position="452"/>
    </location>
</feature>
<feature type="binding site" evidence="1">
    <location>
        <position position="160"/>
    </location>
    <ligand>
        <name>ATP</name>
        <dbReference type="ChEBI" id="CHEBI:30616"/>
    </ligand>
</feature>
<feature type="binding site" evidence="1">
    <location>
        <position position="162"/>
    </location>
    <ligand>
        <name>ATP</name>
        <dbReference type="ChEBI" id="CHEBI:30616"/>
    </ligand>
</feature>
<feature type="binding site" evidence="1">
    <location>
        <position position="163"/>
    </location>
    <ligand>
        <name>ATP</name>
        <dbReference type="ChEBI" id="CHEBI:30616"/>
    </ligand>
</feature>
<feature type="binding site" evidence="1">
    <location>
        <position position="164"/>
    </location>
    <ligand>
        <name>ATP</name>
        <dbReference type="ChEBI" id="CHEBI:30616"/>
    </ligand>
</feature>
<sequence length="452" mass="51380">MSTTAWQKCLGLLQDEFSAQQFNTWLRPLQAYMDEQRLILLAPNRFVVDWVRKHFFSRIEELIKQFSGDDIKAISIEVGSKPVEAVDTPAETIVTSSSTAPLKSAPKKAVDYKSSHLNKKFVFDSFVEGNSNQLARAASMQVAERPGDAYNPLFIYGGVGLGKTHLMHAIGNSILKNNPEAKVLYLHSERFVADMVKALQTNSINEFKRFYRSLNALLIDDIQFFAGKDRSQEEFFHTFNALLEGQQQIILTSDRYPKEIEGMEERLKSRFGWGLTVAVEPPELETRVAILISKAEQSNIELPYEVAFFIAKRIRSNVRELEGALRRVIANAHFTGKPITIEFVHEALRDLLALQDKLVTIENIQKTVAEYYKVKVADLLSKRRSRSIARPRQMAMALSKELTNHSLPEIGDHFGGKDHTTVIHACRKVKELIQDDSDFAEDYKNLMRILSS</sequence>
<dbReference type="EMBL" id="AE017354">
    <property type="protein sequence ID" value="AAU26109.1"/>
    <property type="molecule type" value="Genomic_DNA"/>
</dbReference>
<dbReference type="RefSeq" id="WP_010945763.1">
    <property type="nucleotide sequence ID" value="NC_002942.5"/>
</dbReference>
<dbReference type="RefSeq" id="YP_094056.1">
    <property type="nucleotide sequence ID" value="NC_002942.5"/>
</dbReference>
<dbReference type="SMR" id="Q5ZZK8"/>
<dbReference type="STRING" id="272624.lpg0001"/>
<dbReference type="PaxDb" id="272624-lpg0001"/>
<dbReference type="GeneID" id="57034007"/>
<dbReference type="KEGG" id="lpn:lpg0001"/>
<dbReference type="PATRIC" id="fig|272624.6.peg.1"/>
<dbReference type="eggNOG" id="COG0593">
    <property type="taxonomic scope" value="Bacteria"/>
</dbReference>
<dbReference type="HOGENOM" id="CLU_026910_0_1_6"/>
<dbReference type="OrthoDB" id="9807019at2"/>
<dbReference type="Proteomes" id="UP000000609">
    <property type="component" value="Chromosome"/>
</dbReference>
<dbReference type="GO" id="GO:0005737">
    <property type="term" value="C:cytoplasm"/>
    <property type="evidence" value="ECO:0007669"/>
    <property type="project" value="UniProtKB-SubCell"/>
</dbReference>
<dbReference type="GO" id="GO:0005886">
    <property type="term" value="C:plasma membrane"/>
    <property type="evidence" value="ECO:0007669"/>
    <property type="project" value="TreeGrafter"/>
</dbReference>
<dbReference type="GO" id="GO:0005524">
    <property type="term" value="F:ATP binding"/>
    <property type="evidence" value="ECO:0007669"/>
    <property type="project" value="UniProtKB-UniRule"/>
</dbReference>
<dbReference type="GO" id="GO:0016887">
    <property type="term" value="F:ATP hydrolysis activity"/>
    <property type="evidence" value="ECO:0007669"/>
    <property type="project" value="InterPro"/>
</dbReference>
<dbReference type="GO" id="GO:0003688">
    <property type="term" value="F:DNA replication origin binding"/>
    <property type="evidence" value="ECO:0007669"/>
    <property type="project" value="UniProtKB-UniRule"/>
</dbReference>
<dbReference type="GO" id="GO:0008289">
    <property type="term" value="F:lipid binding"/>
    <property type="evidence" value="ECO:0007669"/>
    <property type="project" value="UniProtKB-KW"/>
</dbReference>
<dbReference type="GO" id="GO:0006270">
    <property type="term" value="P:DNA replication initiation"/>
    <property type="evidence" value="ECO:0007669"/>
    <property type="project" value="UniProtKB-UniRule"/>
</dbReference>
<dbReference type="GO" id="GO:0006275">
    <property type="term" value="P:regulation of DNA replication"/>
    <property type="evidence" value="ECO:0007669"/>
    <property type="project" value="UniProtKB-UniRule"/>
</dbReference>
<dbReference type="CDD" id="cd00009">
    <property type="entry name" value="AAA"/>
    <property type="match status" value="1"/>
</dbReference>
<dbReference type="CDD" id="cd06571">
    <property type="entry name" value="Bac_DnaA_C"/>
    <property type="match status" value="1"/>
</dbReference>
<dbReference type="FunFam" id="1.10.1750.10:FF:000001">
    <property type="entry name" value="Chromosomal replication initiator protein DnaA"/>
    <property type="match status" value="1"/>
</dbReference>
<dbReference type="FunFam" id="1.10.8.60:FF:000003">
    <property type="entry name" value="Chromosomal replication initiator protein DnaA"/>
    <property type="match status" value="1"/>
</dbReference>
<dbReference type="FunFam" id="3.40.50.300:FF:000103">
    <property type="entry name" value="Chromosomal replication initiator protein DnaA"/>
    <property type="match status" value="1"/>
</dbReference>
<dbReference type="Gene3D" id="1.10.1750.10">
    <property type="match status" value="1"/>
</dbReference>
<dbReference type="Gene3D" id="1.10.8.60">
    <property type="match status" value="1"/>
</dbReference>
<dbReference type="Gene3D" id="3.30.300.180">
    <property type="match status" value="1"/>
</dbReference>
<dbReference type="Gene3D" id="3.40.50.300">
    <property type="entry name" value="P-loop containing nucleotide triphosphate hydrolases"/>
    <property type="match status" value="1"/>
</dbReference>
<dbReference type="HAMAP" id="MF_00377">
    <property type="entry name" value="DnaA_bact"/>
    <property type="match status" value="1"/>
</dbReference>
<dbReference type="InterPro" id="IPR003593">
    <property type="entry name" value="AAA+_ATPase"/>
</dbReference>
<dbReference type="InterPro" id="IPR001957">
    <property type="entry name" value="Chromosome_initiator_DnaA"/>
</dbReference>
<dbReference type="InterPro" id="IPR020591">
    <property type="entry name" value="Chromosome_initiator_DnaA-like"/>
</dbReference>
<dbReference type="InterPro" id="IPR018312">
    <property type="entry name" value="Chromosome_initiator_DnaA_CS"/>
</dbReference>
<dbReference type="InterPro" id="IPR013159">
    <property type="entry name" value="DnaA_C"/>
</dbReference>
<dbReference type="InterPro" id="IPR013317">
    <property type="entry name" value="DnaA_dom"/>
</dbReference>
<dbReference type="InterPro" id="IPR024633">
    <property type="entry name" value="DnaA_N_dom"/>
</dbReference>
<dbReference type="InterPro" id="IPR038454">
    <property type="entry name" value="DnaA_N_sf"/>
</dbReference>
<dbReference type="InterPro" id="IPR027417">
    <property type="entry name" value="P-loop_NTPase"/>
</dbReference>
<dbReference type="InterPro" id="IPR010921">
    <property type="entry name" value="Trp_repressor/repl_initiator"/>
</dbReference>
<dbReference type="NCBIfam" id="TIGR00362">
    <property type="entry name" value="DnaA"/>
    <property type="match status" value="1"/>
</dbReference>
<dbReference type="PANTHER" id="PTHR30050">
    <property type="entry name" value="CHROMOSOMAL REPLICATION INITIATOR PROTEIN DNAA"/>
    <property type="match status" value="1"/>
</dbReference>
<dbReference type="PANTHER" id="PTHR30050:SF2">
    <property type="entry name" value="CHROMOSOMAL REPLICATION INITIATOR PROTEIN DNAA"/>
    <property type="match status" value="1"/>
</dbReference>
<dbReference type="Pfam" id="PF00308">
    <property type="entry name" value="Bac_DnaA"/>
    <property type="match status" value="1"/>
</dbReference>
<dbReference type="Pfam" id="PF08299">
    <property type="entry name" value="Bac_DnaA_C"/>
    <property type="match status" value="1"/>
</dbReference>
<dbReference type="Pfam" id="PF11638">
    <property type="entry name" value="DnaA_N"/>
    <property type="match status" value="1"/>
</dbReference>
<dbReference type="PRINTS" id="PR00051">
    <property type="entry name" value="DNAA"/>
</dbReference>
<dbReference type="SMART" id="SM00382">
    <property type="entry name" value="AAA"/>
    <property type="match status" value="1"/>
</dbReference>
<dbReference type="SMART" id="SM00760">
    <property type="entry name" value="Bac_DnaA_C"/>
    <property type="match status" value="1"/>
</dbReference>
<dbReference type="SUPFAM" id="SSF52540">
    <property type="entry name" value="P-loop containing nucleoside triphosphate hydrolases"/>
    <property type="match status" value="1"/>
</dbReference>
<dbReference type="SUPFAM" id="SSF48295">
    <property type="entry name" value="TrpR-like"/>
    <property type="match status" value="1"/>
</dbReference>
<dbReference type="PROSITE" id="PS01008">
    <property type="entry name" value="DNAA"/>
    <property type="match status" value="1"/>
</dbReference>
<protein>
    <recommendedName>
        <fullName evidence="1">Chromosomal replication initiator protein DnaA</fullName>
    </recommendedName>
</protein>
<evidence type="ECO:0000255" key="1">
    <source>
        <dbReference type="HAMAP-Rule" id="MF_00377"/>
    </source>
</evidence>
<gene>
    <name evidence="1" type="primary">dnaA</name>
    <name type="ordered locus">lpg0001</name>
</gene>
<reference key="1">
    <citation type="journal article" date="2004" name="Science">
        <title>The genomic sequence of the accidental pathogen Legionella pneumophila.</title>
        <authorList>
            <person name="Chien M."/>
            <person name="Morozova I."/>
            <person name="Shi S."/>
            <person name="Sheng H."/>
            <person name="Chen J."/>
            <person name="Gomez S.M."/>
            <person name="Asamani G."/>
            <person name="Hill K."/>
            <person name="Nuara J."/>
            <person name="Feder M."/>
            <person name="Rineer J."/>
            <person name="Greenberg J.J."/>
            <person name="Steshenko V."/>
            <person name="Park S.H."/>
            <person name="Zhao B."/>
            <person name="Teplitskaya E."/>
            <person name="Edwards J.R."/>
            <person name="Pampou S."/>
            <person name="Georghiou A."/>
            <person name="Chou I.-C."/>
            <person name="Iannuccilli W."/>
            <person name="Ulz M.E."/>
            <person name="Kim D.H."/>
            <person name="Geringer-Sameth A."/>
            <person name="Goldsberry C."/>
            <person name="Morozov P."/>
            <person name="Fischer S.G."/>
            <person name="Segal G."/>
            <person name="Qu X."/>
            <person name="Rzhetsky A."/>
            <person name="Zhang P."/>
            <person name="Cayanis E."/>
            <person name="De Jong P.J."/>
            <person name="Ju J."/>
            <person name="Kalachikov S."/>
            <person name="Shuman H.A."/>
            <person name="Russo J.J."/>
        </authorList>
    </citation>
    <scope>NUCLEOTIDE SEQUENCE [LARGE SCALE GENOMIC DNA]</scope>
    <source>
        <strain>Philadelphia 1 / ATCC 33152 / DSM 7513</strain>
    </source>
</reference>